<sequence>MSRTYKATGINLKSMPFGEADRLLTILTREQGLVRAVAPGCRKPKSKLGGRSALFVVNDLMLVQGRSLDKIAQAETLESYPGLSQNLAKLTTSQYLAELTLYQALSGQPQTELWDLFCQQLTQLQNATLAQVPCCLIHGTLKLLAGAGIAPQVHACCVTHQPLDPPTSNPTWRVGFSAGAGGTVTLTGPPRPRTAIQQAAEQAIAYPLGADYRVQGKLSAQELALLQDLNPAEIQPASPLPLPLIATYPLVIWQGVESALRHYAEAYFDRPIRSAALIDTCFTPLPDLTSVPS</sequence>
<comment type="function">
    <text evidence="1">Involved in DNA repair and RecF pathway recombination.</text>
</comment>
<comment type="similarity">
    <text evidence="1">Belongs to the RecO family.</text>
</comment>
<evidence type="ECO:0000255" key="1">
    <source>
        <dbReference type="HAMAP-Rule" id="MF_00201"/>
    </source>
</evidence>
<reference key="1">
    <citation type="journal article" date="2008" name="Proc. Natl. Acad. Sci. U.S.A.">
        <title>Niche adaptation and genome expansion in the chlorophyll d-producing cyanobacterium Acaryochloris marina.</title>
        <authorList>
            <person name="Swingley W.D."/>
            <person name="Chen M."/>
            <person name="Cheung P.C."/>
            <person name="Conrad A.L."/>
            <person name="Dejesa L.C."/>
            <person name="Hao J."/>
            <person name="Honchak B.M."/>
            <person name="Karbach L.E."/>
            <person name="Kurdoglu A."/>
            <person name="Lahiri S."/>
            <person name="Mastrian S.D."/>
            <person name="Miyashita H."/>
            <person name="Page L."/>
            <person name="Ramakrishna P."/>
            <person name="Satoh S."/>
            <person name="Sattley W.M."/>
            <person name="Shimada Y."/>
            <person name="Taylor H.L."/>
            <person name="Tomo T."/>
            <person name="Tsuchiya T."/>
            <person name="Wang Z.T."/>
            <person name="Raymond J."/>
            <person name="Mimuro M."/>
            <person name="Blankenship R.E."/>
            <person name="Touchman J.W."/>
        </authorList>
    </citation>
    <scope>NUCLEOTIDE SEQUENCE [LARGE SCALE GENOMIC DNA]</scope>
    <source>
        <strain>MBIC 11017</strain>
    </source>
</reference>
<gene>
    <name evidence="1" type="primary">recO</name>
    <name type="ordered locus">AM1_4634</name>
</gene>
<dbReference type="EMBL" id="CP000828">
    <property type="protein sequence ID" value="ABW29608.1"/>
    <property type="molecule type" value="Genomic_DNA"/>
</dbReference>
<dbReference type="RefSeq" id="WP_012164911.1">
    <property type="nucleotide sequence ID" value="NC_009925.1"/>
</dbReference>
<dbReference type="SMR" id="B0C0B6"/>
<dbReference type="STRING" id="329726.AM1_4634"/>
<dbReference type="KEGG" id="amr:AM1_4634"/>
<dbReference type="eggNOG" id="COG1381">
    <property type="taxonomic scope" value="Bacteria"/>
</dbReference>
<dbReference type="HOGENOM" id="CLU_066632_0_0_3"/>
<dbReference type="OrthoDB" id="9797083at2"/>
<dbReference type="Proteomes" id="UP000000268">
    <property type="component" value="Chromosome"/>
</dbReference>
<dbReference type="GO" id="GO:0043590">
    <property type="term" value="C:bacterial nucleoid"/>
    <property type="evidence" value="ECO:0007669"/>
    <property type="project" value="TreeGrafter"/>
</dbReference>
<dbReference type="GO" id="GO:0006310">
    <property type="term" value="P:DNA recombination"/>
    <property type="evidence" value="ECO:0007669"/>
    <property type="project" value="UniProtKB-UniRule"/>
</dbReference>
<dbReference type="GO" id="GO:0006302">
    <property type="term" value="P:double-strand break repair"/>
    <property type="evidence" value="ECO:0007669"/>
    <property type="project" value="TreeGrafter"/>
</dbReference>
<dbReference type="Gene3D" id="2.40.50.140">
    <property type="entry name" value="Nucleic acid-binding proteins"/>
    <property type="match status" value="1"/>
</dbReference>
<dbReference type="Gene3D" id="1.20.1440.120">
    <property type="entry name" value="Recombination protein O, C-terminal domain"/>
    <property type="match status" value="1"/>
</dbReference>
<dbReference type="HAMAP" id="MF_00201">
    <property type="entry name" value="RecO"/>
    <property type="match status" value="1"/>
</dbReference>
<dbReference type="InterPro" id="IPR037278">
    <property type="entry name" value="ARFGAP/RecO"/>
</dbReference>
<dbReference type="InterPro" id="IPR022572">
    <property type="entry name" value="DNA_rep/recomb_RecO_N"/>
</dbReference>
<dbReference type="InterPro" id="IPR012340">
    <property type="entry name" value="NA-bd_OB-fold"/>
</dbReference>
<dbReference type="InterPro" id="IPR003717">
    <property type="entry name" value="RecO"/>
</dbReference>
<dbReference type="InterPro" id="IPR042242">
    <property type="entry name" value="RecO_C"/>
</dbReference>
<dbReference type="NCBIfam" id="TIGR00613">
    <property type="entry name" value="reco"/>
    <property type="match status" value="1"/>
</dbReference>
<dbReference type="PANTHER" id="PTHR33991">
    <property type="entry name" value="DNA REPAIR PROTEIN RECO"/>
    <property type="match status" value="1"/>
</dbReference>
<dbReference type="PANTHER" id="PTHR33991:SF1">
    <property type="entry name" value="DNA REPAIR PROTEIN RECO"/>
    <property type="match status" value="1"/>
</dbReference>
<dbReference type="Pfam" id="PF02565">
    <property type="entry name" value="RecO_C"/>
    <property type="match status" value="1"/>
</dbReference>
<dbReference type="Pfam" id="PF11967">
    <property type="entry name" value="RecO_N"/>
    <property type="match status" value="1"/>
</dbReference>
<dbReference type="SUPFAM" id="SSF57863">
    <property type="entry name" value="ArfGap/RecO-like zinc finger"/>
    <property type="match status" value="1"/>
</dbReference>
<dbReference type="SUPFAM" id="SSF50249">
    <property type="entry name" value="Nucleic acid-binding proteins"/>
    <property type="match status" value="1"/>
</dbReference>
<organism>
    <name type="scientific">Acaryochloris marina (strain MBIC 11017)</name>
    <dbReference type="NCBI Taxonomy" id="329726"/>
    <lineage>
        <taxon>Bacteria</taxon>
        <taxon>Bacillati</taxon>
        <taxon>Cyanobacteriota</taxon>
        <taxon>Cyanophyceae</taxon>
        <taxon>Acaryochloridales</taxon>
        <taxon>Acaryochloridaceae</taxon>
        <taxon>Acaryochloris</taxon>
    </lineage>
</organism>
<name>RECO_ACAM1</name>
<feature type="chain" id="PRO_1000099358" description="DNA repair protein RecO">
    <location>
        <begin position="1"/>
        <end position="293"/>
    </location>
</feature>
<accession>B0C0B6</accession>
<protein>
    <recommendedName>
        <fullName evidence="1">DNA repair protein RecO</fullName>
    </recommendedName>
    <alternativeName>
        <fullName evidence="1">Recombination protein O</fullName>
    </alternativeName>
</protein>
<keyword id="KW-0227">DNA damage</keyword>
<keyword id="KW-0233">DNA recombination</keyword>
<keyword id="KW-0234">DNA repair</keyword>
<keyword id="KW-1185">Reference proteome</keyword>
<proteinExistence type="inferred from homology"/>